<proteinExistence type="inferred from homology"/>
<reference key="1">
    <citation type="journal article" date="2005" name="Science">
        <title>Life at depth: Photobacterium profundum genome sequence and expression analysis.</title>
        <authorList>
            <person name="Vezzi A."/>
            <person name="Campanaro S."/>
            <person name="D'Angelo M."/>
            <person name="Simonato F."/>
            <person name="Vitulo N."/>
            <person name="Lauro F.M."/>
            <person name="Cestaro A."/>
            <person name="Malacrida G."/>
            <person name="Simionati B."/>
            <person name="Cannata N."/>
            <person name="Romualdi C."/>
            <person name="Bartlett D.H."/>
            <person name="Valle G."/>
        </authorList>
    </citation>
    <scope>NUCLEOTIDE SEQUENCE [LARGE SCALE GENOMIC DNA]</scope>
    <source>
        <strain>ATCC BAA-1253 / SS9</strain>
    </source>
</reference>
<keyword id="KW-0997">Cell inner membrane</keyword>
<keyword id="KW-1003">Cell membrane</keyword>
<keyword id="KW-0378">Hydrolase</keyword>
<keyword id="KW-0441">Lipid A biosynthesis</keyword>
<keyword id="KW-0444">Lipid biosynthesis</keyword>
<keyword id="KW-0443">Lipid metabolism</keyword>
<keyword id="KW-0464">Manganese</keyword>
<keyword id="KW-0472">Membrane</keyword>
<keyword id="KW-0479">Metal-binding</keyword>
<keyword id="KW-1185">Reference proteome</keyword>
<organism>
    <name type="scientific">Photobacterium profundum (strain SS9)</name>
    <dbReference type="NCBI Taxonomy" id="298386"/>
    <lineage>
        <taxon>Bacteria</taxon>
        <taxon>Pseudomonadati</taxon>
        <taxon>Pseudomonadota</taxon>
        <taxon>Gammaproteobacteria</taxon>
        <taxon>Vibrionales</taxon>
        <taxon>Vibrionaceae</taxon>
        <taxon>Photobacterium</taxon>
    </lineage>
</organism>
<name>LPXH_PHOPR</name>
<accession>Q6LT69</accession>
<sequence>MTTLFIADLHLSAERTDITDCFLHFMQQEARNIDALYVLGDLFEMWIGDDDDSPFLQQIKHAFKQLTDSGVPCYFIYGNRDFLIGSRFCQETGMTLLPEHTVIDLYGTPTLILHGDTLCIEDEDYLRYRKRVHNRFIQWLFFCLPLTYRQKVGDKIRSGSSKNNKEKTTSIMDVTPNEVVRLMAEQNVIDMIHGHTHRPDVHHIEVNGKAAIRTVLGDWYHHGSVLVCTPDGCKLETRDFSEKNQ</sequence>
<protein>
    <recommendedName>
        <fullName evidence="1">UDP-2,3-diacylglucosamine hydrolase</fullName>
        <ecNumber evidence="1">3.6.1.54</ecNumber>
    </recommendedName>
    <alternativeName>
        <fullName evidence="1">UDP-2,3-diacylglucosamine diphosphatase</fullName>
    </alternativeName>
</protein>
<evidence type="ECO:0000255" key="1">
    <source>
        <dbReference type="HAMAP-Rule" id="MF_00575"/>
    </source>
</evidence>
<feature type="chain" id="PRO_1000025066" description="UDP-2,3-diacylglucosamine hydrolase">
    <location>
        <begin position="1"/>
        <end position="245"/>
    </location>
</feature>
<feature type="binding site" evidence="1">
    <location>
        <position position="8"/>
    </location>
    <ligand>
        <name>Mn(2+)</name>
        <dbReference type="ChEBI" id="CHEBI:29035"/>
        <label>1</label>
    </ligand>
</feature>
<feature type="binding site" evidence="1">
    <location>
        <position position="10"/>
    </location>
    <ligand>
        <name>Mn(2+)</name>
        <dbReference type="ChEBI" id="CHEBI:29035"/>
        <label>1</label>
    </ligand>
</feature>
<feature type="binding site" evidence="1">
    <location>
        <position position="41"/>
    </location>
    <ligand>
        <name>Mn(2+)</name>
        <dbReference type="ChEBI" id="CHEBI:29035"/>
        <label>1</label>
    </ligand>
</feature>
<feature type="binding site" evidence="1">
    <location>
        <position position="41"/>
    </location>
    <ligand>
        <name>Mn(2+)</name>
        <dbReference type="ChEBI" id="CHEBI:29035"/>
        <label>2</label>
    </ligand>
</feature>
<feature type="binding site" evidence="1">
    <location>
        <begin position="79"/>
        <end position="80"/>
    </location>
    <ligand>
        <name>substrate</name>
    </ligand>
</feature>
<feature type="binding site" evidence="1">
    <location>
        <position position="79"/>
    </location>
    <ligand>
        <name>Mn(2+)</name>
        <dbReference type="ChEBI" id="CHEBI:29035"/>
        <label>2</label>
    </ligand>
</feature>
<feature type="binding site" evidence="1">
    <location>
        <position position="114"/>
    </location>
    <ligand>
        <name>Mn(2+)</name>
        <dbReference type="ChEBI" id="CHEBI:29035"/>
        <label>2</label>
    </ligand>
</feature>
<feature type="binding site" evidence="1">
    <location>
        <position position="122"/>
    </location>
    <ligand>
        <name>substrate</name>
    </ligand>
</feature>
<feature type="binding site" evidence="1">
    <location>
        <position position="160"/>
    </location>
    <ligand>
        <name>substrate</name>
    </ligand>
</feature>
<feature type="binding site" evidence="1">
    <location>
        <position position="164"/>
    </location>
    <ligand>
        <name>substrate</name>
    </ligand>
</feature>
<feature type="binding site" evidence="1">
    <location>
        <position position="167"/>
    </location>
    <ligand>
        <name>substrate</name>
    </ligand>
</feature>
<feature type="binding site" evidence="1">
    <location>
        <position position="195"/>
    </location>
    <ligand>
        <name>Mn(2+)</name>
        <dbReference type="ChEBI" id="CHEBI:29035"/>
        <label>2</label>
    </ligand>
</feature>
<feature type="binding site" evidence="1">
    <location>
        <position position="195"/>
    </location>
    <ligand>
        <name>substrate</name>
    </ligand>
</feature>
<feature type="binding site" evidence="1">
    <location>
        <position position="197"/>
    </location>
    <ligand>
        <name>Mn(2+)</name>
        <dbReference type="ChEBI" id="CHEBI:29035"/>
        <label>1</label>
    </ligand>
</feature>
<comment type="function">
    <text evidence="1">Hydrolyzes the pyrophosphate bond of UDP-2,3-diacylglucosamine to yield 2,3-diacylglucosamine 1-phosphate (lipid X) and UMP by catalyzing the attack of water at the alpha-P atom. Involved in the biosynthesis of lipid A, a phosphorylated glycolipid that anchors the lipopolysaccharide to the outer membrane of the cell.</text>
</comment>
<comment type="catalytic activity">
    <reaction evidence="1">
        <text>UDP-2-N,3-O-bis[(3R)-3-hydroxytetradecanoyl]-alpha-D-glucosamine + H2O = 2-N,3-O-bis[(3R)-3-hydroxytetradecanoyl]-alpha-D-glucosaminyl 1-phosphate + UMP + 2 H(+)</text>
        <dbReference type="Rhea" id="RHEA:25213"/>
        <dbReference type="ChEBI" id="CHEBI:15377"/>
        <dbReference type="ChEBI" id="CHEBI:15378"/>
        <dbReference type="ChEBI" id="CHEBI:57865"/>
        <dbReference type="ChEBI" id="CHEBI:57957"/>
        <dbReference type="ChEBI" id="CHEBI:78847"/>
        <dbReference type="EC" id="3.6.1.54"/>
    </reaction>
</comment>
<comment type="cofactor">
    <cofactor evidence="1">
        <name>Mn(2+)</name>
        <dbReference type="ChEBI" id="CHEBI:29035"/>
    </cofactor>
    <text evidence="1">Binds 2 Mn(2+) ions per subunit in a binuclear metal center.</text>
</comment>
<comment type="pathway">
    <text evidence="1">Glycolipid biosynthesis; lipid IV(A) biosynthesis; lipid IV(A) from (3R)-3-hydroxytetradecanoyl-[acyl-carrier-protein] and UDP-N-acetyl-alpha-D-glucosamine: step 4/6.</text>
</comment>
<comment type="subcellular location">
    <subcellularLocation>
        <location evidence="1">Cell inner membrane</location>
        <topology evidence="1">Peripheral membrane protein</topology>
        <orientation evidence="1">Cytoplasmic side</orientation>
    </subcellularLocation>
</comment>
<comment type="similarity">
    <text evidence="1">Belongs to the LpxH family.</text>
</comment>
<gene>
    <name evidence="1" type="primary">lpxH</name>
    <name type="ordered locus">PBPRA1096</name>
</gene>
<dbReference type="EC" id="3.6.1.54" evidence="1"/>
<dbReference type="EMBL" id="CR378666">
    <property type="protein sequence ID" value="CAG19507.1"/>
    <property type="molecule type" value="Genomic_DNA"/>
</dbReference>
<dbReference type="RefSeq" id="WP_011217840.1">
    <property type="nucleotide sequence ID" value="NC_006370.1"/>
</dbReference>
<dbReference type="SMR" id="Q6LT69"/>
<dbReference type="STRING" id="298386.PBPRA1096"/>
<dbReference type="KEGG" id="ppr:PBPRA1096"/>
<dbReference type="eggNOG" id="COG2908">
    <property type="taxonomic scope" value="Bacteria"/>
</dbReference>
<dbReference type="HOGENOM" id="CLU_074586_0_0_6"/>
<dbReference type="UniPathway" id="UPA00359">
    <property type="reaction ID" value="UER00480"/>
</dbReference>
<dbReference type="Proteomes" id="UP000000593">
    <property type="component" value="Chromosome 1"/>
</dbReference>
<dbReference type="GO" id="GO:0005737">
    <property type="term" value="C:cytoplasm"/>
    <property type="evidence" value="ECO:0007669"/>
    <property type="project" value="InterPro"/>
</dbReference>
<dbReference type="GO" id="GO:0019897">
    <property type="term" value="C:extrinsic component of plasma membrane"/>
    <property type="evidence" value="ECO:0007669"/>
    <property type="project" value="UniProtKB-UniRule"/>
</dbReference>
<dbReference type="GO" id="GO:0030145">
    <property type="term" value="F:manganese ion binding"/>
    <property type="evidence" value="ECO:0007669"/>
    <property type="project" value="UniProtKB-UniRule"/>
</dbReference>
<dbReference type="GO" id="GO:0008758">
    <property type="term" value="F:UDP-2,3-diacylglucosamine hydrolase activity"/>
    <property type="evidence" value="ECO:0007669"/>
    <property type="project" value="UniProtKB-UniRule"/>
</dbReference>
<dbReference type="GO" id="GO:0009245">
    <property type="term" value="P:lipid A biosynthetic process"/>
    <property type="evidence" value="ECO:0007669"/>
    <property type="project" value="UniProtKB-UniRule"/>
</dbReference>
<dbReference type="CDD" id="cd07398">
    <property type="entry name" value="MPP_YbbF-LpxH"/>
    <property type="match status" value="1"/>
</dbReference>
<dbReference type="Gene3D" id="3.60.21.10">
    <property type="match status" value="1"/>
</dbReference>
<dbReference type="HAMAP" id="MF_00575">
    <property type="entry name" value="LpxH"/>
    <property type="match status" value="1"/>
</dbReference>
<dbReference type="InterPro" id="IPR004843">
    <property type="entry name" value="Calcineurin-like_PHP_ApaH"/>
</dbReference>
<dbReference type="InterPro" id="IPR043461">
    <property type="entry name" value="LpxH-like"/>
</dbReference>
<dbReference type="InterPro" id="IPR029052">
    <property type="entry name" value="Metallo-depent_PP-like"/>
</dbReference>
<dbReference type="InterPro" id="IPR010138">
    <property type="entry name" value="UDP-diacylglucosamine_Hdrlase"/>
</dbReference>
<dbReference type="NCBIfam" id="TIGR01854">
    <property type="entry name" value="lipid_A_lpxH"/>
    <property type="match status" value="1"/>
</dbReference>
<dbReference type="NCBIfam" id="NF003743">
    <property type="entry name" value="PRK05340.1"/>
    <property type="match status" value="1"/>
</dbReference>
<dbReference type="PANTHER" id="PTHR34990:SF1">
    <property type="entry name" value="UDP-2,3-DIACYLGLUCOSAMINE HYDROLASE"/>
    <property type="match status" value="1"/>
</dbReference>
<dbReference type="PANTHER" id="PTHR34990">
    <property type="entry name" value="UDP-2,3-DIACYLGLUCOSAMINE HYDROLASE-RELATED"/>
    <property type="match status" value="1"/>
</dbReference>
<dbReference type="Pfam" id="PF00149">
    <property type="entry name" value="Metallophos"/>
    <property type="match status" value="1"/>
</dbReference>
<dbReference type="SUPFAM" id="SSF56300">
    <property type="entry name" value="Metallo-dependent phosphatases"/>
    <property type="match status" value="1"/>
</dbReference>